<evidence type="ECO:0000250" key="1"/>
<evidence type="ECO:0000255" key="2"/>
<evidence type="ECO:0000269" key="3">
    <source>
    </source>
</evidence>
<evidence type="ECO:0000305" key="4"/>
<reference key="1">
    <citation type="journal article" date="2004" name="J. Biol. Chem.">
        <title>Peptidoglycan recognition proteins involved in 1,3-beta-D-glucan-dependent prophenoloxidase activation system of insect.</title>
        <authorList>
            <person name="Lee M.H."/>
            <person name="Osaki T."/>
            <person name="Lee J.Y."/>
            <person name="Baek M.J."/>
            <person name="Zhang R."/>
            <person name="Park J.W."/>
            <person name="Kawabata S."/>
            <person name="Soederhaell K."/>
            <person name="Lee B.L."/>
        </authorList>
    </citation>
    <scope>NUCLEOTIDE SEQUENCE [MRNA]</scope>
    <scope>PROTEIN SEQUENCE OF 20-32</scope>
    <scope>FUNCTION</scope>
    <scope>SUBCELLULAR LOCATION</scope>
    <scope>TISSUE SPECIFICITY</scope>
    <source>
        <tissue>Larva</tissue>
    </source>
</reference>
<protein>
    <recommendedName>
        <fullName>Peptidoglycan-recognition protein 2</fullName>
    </recommendedName>
    <alternativeName>
        <fullName>Hd-PGRP-2</fullName>
    </alternativeName>
</protein>
<sequence>MKAFLVALVVAIELTLVFAGCPTIVSKNRWGGQQASQVQYTVKPLKYVIIHHTSTPTCTNEDDCSRRLVNIQDYHMNRLDFDDIGYNFMIGGDGQIYEGAGWHKEGAHARGWNSKSLGIGFIGDFQTNLPSSKQLDAGKKFLECAVEKGEIEDTYKLIGARTVRPTDSPGTLLFREIQTWRGFTRNP</sequence>
<dbReference type="EMBL" id="AB115775">
    <property type="protein sequence ID" value="BAD08317.1"/>
    <property type="molecule type" value="mRNA"/>
</dbReference>
<dbReference type="SMR" id="Q765P3"/>
<dbReference type="GO" id="GO:0005576">
    <property type="term" value="C:extracellular region"/>
    <property type="evidence" value="ECO:0007669"/>
    <property type="project" value="UniProtKB-SubCell"/>
</dbReference>
<dbReference type="GO" id="GO:0008745">
    <property type="term" value="F:N-acetylmuramoyl-L-alanine amidase activity"/>
    <property type="evidence" value="ECO:0007669"/>
    <property type="project" value="InterPro"/>
</dbReference>
<dbReference type="GO" id="GO:0042834">
    <property type="term" value="F:peptidoglycan binding"/>
    <property type="evidence" value="ECO:0007669"/>
    <property type="project" value="InterPro"/>
</dbReference>
<dbReference type="GO" id="GO:0008270">
    <property type="term" value="F:zinc ion binding"/>
    <property type="evidence" value="ECO:0007669"/>
    <property type="project" value="InterPro"/>
</dbReference>
<dbReference type="GO" id="GO:0045087">
    <property type="term" value="P:innate immune response"/>
    <property type="evidence" value="ECO:0007669"/>
    <property type="project" value="UniProtKB-KW"/>
</dbReference>
<dbReference type="GO" id="GO:0009253">
    <property type="term" value="P:peptidoglycan catabolic process"/>
    <property type="evidence" value="ECO:0007669"/>
    <property type="project" value="InterPro"/>
</dbReference>
<dbReference type="CDD" id="cd06583">
    <property type="entry name" value="PGRP"/>
    <property type="match status" value="1"/>
</dbReference>
<dbReference type="FunFam" id="3.40.80.10:FF:000001">
    <property type="entry name" value="Peptidoglycan recognition protein 1"/>
    <property type="match status" value="1"/>
</dbReference>
<dbReference type="Gene3D" id="3.40.80.10">
    <property type="entry name" value="Peptidoglycan recognition protein-like"/>
    <property type="match status" value="1"/>
</dbReference>
<dbReference type="InterPro" id="IPR036505">
    <property type="entry name" value="Amidase/PGRP_sf"/>
</dbReference>
<dbReference type="InterPro" id="IPR002502">
    <property type="entry name" value="Amidase_domain"/>
</dbReference>
<dbReference type="InterPro" id="IPR017331">
    <property type="entry name" value="Peptidoglycan_recognition"/>
</dbReference>
<dbReference type="InterPro" id="IPR015510">
    <property type="entry name" value="PGRP"/>
</dbReference>
<dbReference type="InterPro" id="IPR006619">
    <property type="entry name" value="PGRP_domain_met/bac"/>
</dbReference>
<dbReference type="PANTHER" id="PTHR11022">
    <property type="entry name" value="PEPTIDOGLYCAN RECOGNITION PROTEIN"/>
    <property type="match status" value="1"/>
</dbReference>
<dbReference type="PANTHER" id="PTHR11022:SF74">
    <property type="entry name" value="PEPTIDOGLYCAN-RECOGNITION PROTEIN SA"/>
    <property type="match status" value="1"/>
</dbReference>
<dbReference type="Pfam" id="PF01510">
    <property type="entry name" value="Amidase_2"/>
    <property type="match status" value="1"/>
</dbReference>
<dbReference type="PIRSF" id="PIRSF037945">
    <property type="entry name" value="PGRPs"/>
    <property type="match status" value="1"/>
</dbReference>
<dbReference type="SMART" id="SM00644">
    <property type="entry name" value="Ami_2"/>
    <property type="match status" value="1"/>
</dbReference>
<dbReference type="SMART" id="SM00701">
    <property type="entry name" value="PGRP"/>
    <property type="match status" value="1"/>
</dbReference>
<dbReference type="SUPFAM" id="SSF55846">
    <property type="entry name" value="N-acetylmuramoyl-L-alanine amidase-like"/>
    <property type="match status" value="1"/>
</dbReference>
<accession>Q765P3</accession>
<proteinExistence type="evidence at protein level"/>
<organism>
    <name type="scientific">Holotrichia diomphalia</name>
    <name type="common">Korean black chafer</name>
    <dbReference type="NCBI Taxonomy" id="33394"/>
    <lineage>
        <taxon>Eukaryota</taxon>
        <taxon>Metazoa</taxon>
        <taxon>Ecdysozoa</taxon>
        <taxon>Arthropoda</taxon>
        <taxon>Hexapoda</taxon>
        <taxon>Insecta</taxon>
        <taxon>Pterygota</taxon>
        <taxon>Neoptera</taxon>
        <taxon>Endopterygota</taxon>
        <taxon>Coleoptera</taxon>
        <taxon>Polyphaga</taxon>
        <taxon>Scarabaeiformia</taxon>
        <taxon>Scarabaeidae</taxon>
        <taxon>Melolonthinae</taxon>
        <taxon>Holotrichia</taxon>
    </lineage>
</organism>
<comment type="function">
    <text evidence="3">Peptidoglycan-recognition protein probably involved in innate immunity by binding to peptidoglycans (PGN) of bacteria and activating the prophenoloxidase (proPO) cascade immune response. Binds to 1,3-beta-D-glucan and PGN.</text>
</comment>
<comment type="subcellular location">
    <subcellularLocation>
        <location evidence="3">Secreted</location>
    </subcellularLocation>
</comment>
<comment type="tissue specificity">
    <text evidence="3">Localizes to plasma (at protein level).</text>
</comment>
<comment type="similarity">
    <text evidence="4">Belongs to the N-acetylmuramoyl-L-alanine amidase 2 family.</text>
</comment>
<name>PGRP2_HOLDI</name>
<feature type="signal peptide" evidence="3">
    <location>
        <begin position="1"/>
        <end position="19"/>
    </location>
</feature>
<feature type="chain" id="PRO_0000023917" description="Peptidoglycan-recognition protein 2">
    <location>
        <begin position="20"/>
        <end position="187"/>
    </location>
</feature>
<feature type="domain" description="N-acetylmuramoyl-L-alanine amidase" evidence="2">
    <location>
        <begin position="43"/>
        <end position="170"/>
    </location>
</feature>
<feature type="disulfide bond" evidence="1">
    <location>
        <begin position="21"/>
        <end position="144"/>
    </location>
</feature>
<feature type="disulfide bond" evidence="1">
    <location>
        <begin position="58"/>
        <end position="64"/>
    </location>
</feature>
<keyword id="KW-0903">Direct protein sequencing</keyword>
<keyword id="KW-1015">Disulfide bond</keyword>
<keyword id="KW-0391">Immunity</keyword>
<keyword id="KW-0399">Innate immunity</keyword>
<keyword id="KW-0964">Secreted</keyword>
<keyword id="KW-0732">Signal</keyword>
<gene>
    <name type="primary">PGRP-2</name>
</gene>